<proteinExistence type="inferred from homology"/>
<reference key="1">
    <citation type="submission" date="2008-02" db="EMBL/GenBank/DDBJ databases">
        <title>Complete sequence of Pseudomonas putida W619.</title>
        <authorList>
            <person name="Copeland A."/>
            <person name="Lucas S."/>
            <person name="Lapidus A."/>
            <person name="Barry K."/>
            <person name="Detter J.C."/>
            <person name="Glavina del Rio T."/>
            <person name="Dalin E."/>
            <person name="Tice H."/>
            <person name="Pitluck S."/>
            <person name="Chain P."/>
            <person name="Malfatti S."/>
            <person name="Shin M."/>
            <person name="Vergez L."/>
            <person name="Schmutz J."/>
            <person name="Larimer F."/>
            <person name="Land M."/>
            <person name="Hauser L."/>
            <person name="Kyrpides N."/>
            <person name="Kim E."/>
            <person name="Taghavi S."/>
            <person name="Vangronsveld D."/>
            <person name="van der Lelie D."/>
            <person name="Richardson P."/>
        </authorList>
    </citation>
    <scope>NUCLEOTIDE SEQUENCE [LARGE SCALE GENOMIC DNA]</scope>
    <source>
        <strain>W619</strain>
    </source>
</reference>
<name>URE2_PSEPW</name>
<gene>
    <name evidence="1" type="primary">ureB</name>
    <name type="ordered locus">PputW619_2416</name>
</gene>
<keyword id="KW-0963">Cytoplasm</keyword>
<keyword id="KW-0378">Hydrolase</keyword>
<evidence type="ECO:0000255" key="1">
    <source>
        <dbReference type="HAMAP-Rule" id="MF_01954"/>
    </source>
</evidence>
<protein>
    <recommendedName>
        <fullName evidence="1">Urease subunit beta</fullName>
        <ecNumber evidence="1">3.5.1.5</ecNumber>
    </recommendedName>
    <alternativeName>
        <fullName evidence="1">Urea amidohydrolase subunit beta</fullName>
    </alternativeName>
</protein>
<sequence>MIPGEIQVAAGDIELNVGRETVSVNVANHGDRPVQVGSHYHFYEVNDALVFDREPSRGFRLDIPAGTAVRFEPGQARTVQLVAYAGKREVYGFQGKVMGALEGKA</sequence>
<dbReference type="EC" id="3.5.1.5" evidence="1"/>
<dbReference type="EMBL" id="CP000949">
    <property type="protein sequence ID" value="ACA72916.1"/>
    <property type="molecule type" value="Genomic_DNA"/>
</dbReference>
<dbReference type="SMR" id="B1J814"/>
<dbReference type="STRING" id="390235.PputW619_2416"/>
<dbReference type="KEGG" id="ppw:PputW619_2416"/>
<dbReference type="eggNOG" id="COG0832">
    <property type="taxonomic scope" value="Bacteria"/>
</dbReference>
<dbReference type="HOGENOM" id="CLU_129707_1_1_6"/>
<dbReference type="OrthoDB" id="9797217at2"/>
<dbReference type="UniPathway" id="UPA00258">
    <property type="reaction ID" value="UER00370"/>
</dbReference>
<dbReference type="GO" id="GO:0035550">
    <property type="term" value="C:urease complex"/>
    <property type="evidence" value="ECO:0007669"/>
    <property type="project" value="InterPro"/>
</dbReference>
<dbReference type="GO" id="GO:0009039">
    <property type="term" value="F:urease activity"/>
    <property type="evidence" value="ECO:0007669"/>
    <property type="project" value="UniProtKB-UniRule"/>
</dbReference>
<dbReference type="GO" id="GO:0043419">
    <property type="term" value="P:urea catabolic process"/>
    <property type="evidence" value="ECO:0007669"/>
    <property type="project" value="UniProtKB-UniRule"/>
</dbReference>
<dbReference type="CDD" id="cd00407">
    <property type="entry name" value="Urease_beta"/>
    <property type="match status" value="1"/>
</dbReference>
<dbReference type="FunFam" id="2.10.150.10:FF:000001">
    <property type="entry name" value="Urease subunit beta"/>
    <property type="match status" value="1"/>
</dbReference>
<dbReference type="Gene3D" id="2.10.150.10">
    <property type="entry name" value="Urease, beta subunit"/>
    <property type="match status" value="1"/>
</dbReference>
<dbReference type="HAMAP" id="MF_01954">
    <property type="entry name" value="Urease_beta"/>
    <property type="match status" value="1"/>
</dbReference>
<dbReference type="InterPro" id="IPR002019">
    <property type="entry name" value="Urease_beta-like"/>
</dbReference>
<dbReference type="InterPro" id="IPR036461">
    <property type="entry name" value="Urease_betasu_sf"/>
</dbReference>
<dbReference type="InterPro" id="IPR050069">
    <property type="entry name" value="Urease_subunit"/>
</dbReference>
<dbReference type="NCBIfam" id="NF009682">
    <property type="entry name" value="PRK13203.1"/>
    <property type="match status" value="1"/>
</dbReference>
<dbReference type="NCBIfam" id="TIGR00192">
    <property type="entry name" value="urease_beta"/>
    <property type="match status" value="1"/>
</dbReference>
<dbReference type="PANTHER" id="PTHR33569">
    <property type="entry name" value="UREASE"/>
    <property type="match status" value="1"/>
</dbReference>
<dbReference type="PANTHER" id="PTHR33569:SF1">
    <property type="entry name" value="UREASE"/>
    <property type="match status" value="1"/>
</dbReference>
<dbReference type="Pfam" id="PF00699">
    <property type="entry name" value="Urease_beta"/>
    <property type="match status" value="1"/>
</dbReference>
<dbReference type="SUPFAM" id="SSF51278">
    <property type="entry name" value="Urease, beta-subunit"/>
    <property type="match status" value="1"/>
</dbReference>
<accession>B1J814</accession>
<comment type="catalytic activity">
    <reaction evidence="1">
        <text>urea + 2 H2O + H(+) = hydrogencarbonate + 2 NH4(+)</text>
        <dbReference type="Rhea" id="RHEA:20557"/>
        <dbReference type="ChEBI" id="CHEBI:15377"/>
        <dbReference type="ChEBI" id="CHEBI:15378"/>
        <dbReference type="ChEBI" id="CHEBI:16199"/>
        <dbReference type="ChEBI" id="CHEBI:17544"/>
        <dbReference type="ChEBI" id="CHEBI:28938"/>
        <dbReference type="EC" id="3.5.1.5"/>
    </reaction>
</comment>
<comment type="pathway">
    <text evidence="1">Nitrogen metabolism; urea degradation; CO(2) and NH(3) from urea (urease route): step 1/1.</text>
</comment>
<comment type="subunit">
    <text evidence="1">Heterotrimer of UreA (gamma), UreB (beta) and UreC (alpha) subunits. Three heterotrimers associate to form the active enzyme.</text>
</comment>
<comment type="subcellular location">
    <subcellularLocation>
        <location evidence="1">Cytoplasm</location>
    </subcellularLocation>
</comment>
<comment type="similarity">
    <text evidence="1">Belongs to the urease beta subunit family.</text>
</comment>
<organism>
    <name type="scientific">Pseudomonas putida (strain W619)</name>
    <dbReference type="NCBI Taxonomy" id="390235"/>
    <lineage>
        <taxon>Bacteria</taxon>
        <taxon>Pseudomonadati</taxon>
        <taxon>Pseudomonadota</taxon>
        <taxon>Gammaproteobacteria</taxon>
        <taxon>Pseudomonadales</taxon>
        <taxon>Pseudomonadaceae</taxon>
        <taxon>Pseudomonas</taxon>
    </lineage>
</organism>
<feature type="chain" id="PRO_1000188935" description="Urease subunit beta">
    <location>
        <begin position="1"/>
        <end position="105"/>
    </location>
</feature>